<protein>
    <recommendedName>
        <fullName evidence="1">2-C-methyl-D-erythritol 2,4-cyclodiphosphate synthase</fullName>
        <shortName evidence="1">MECDP-synthase</shortName>
        <shortName evidence="1">MECPP-synthase</shortName>
        <shortName evidence="1">MECPS</shortName>
        <ecNumber evidence="1">4.6.1.12</ecNumber>
    </recommendedName>
</protein>
<comment type="function">
    <text evidence="1">Involved in the biosynthesis of isopentenyl diphosphate (IPP) and dimethylallyl diphosphate (DMAPP), two major building blocks of isoprenoid compounds. Catalyzes the conversion of 4-diphosphocytidyl-2-C-methyl-D-erythritol 2-phosphate (CDP-ME2P) to 2-C-methyl-D-erythritol 2,4-cyclodiphosphate (ME-CPP) with a corresponding release of cytidine 5-monophosphate (CMP).</text>
</comment>
<comment type="catalytic activity">
    <reaction evidence="1">
        <text>4-CDP-2-C-methyl-D-erythritol 2-phosphate = 2-C-methyl-D-erythritol 2,4-cyclic diphosphate + CMP</text>
        <dbReference type="Rhea" id="RHEA:23864"/>
        <dbReference type="ChEBI" id="CHEBI:57919"/>
        <dbReference type="ChEBI" id="CHEBI:58483"/>
        <dbReference type="ChEBI" id="CHEBI:60377"/>
        <dbReference type="EC" id="4.6.1.12"/>
    </reaction>
</comment>
<comment type="cofactor">
    <cofactor evidence="1">
        <name>a divalent metal cation</name>
        <dbReference type="ChEBI" id="CHEBI:60240"/>
    </cofactor>
    <text evidence="1">Binds 1 divalent metal cation per subunit.</text>
</comment>
<comment type="pathway">
    <text evidence="1">Isoprenoid biosynthesis; isopentenyl diphosphate biosynthesis via DXP pathway; isopentenyl diphosphate from 1-deoxy-D-xylulose 5-phosphate: step 4/6.</text>
</comment>
<comment type="subunit">
    <text evidence="1">Homotrimer.</text>
</comment>
<comment type="similarity">
    <text evidence="1">Belongs to the IspF family.</text>
</comment>
<feature type="chain" id="PRO_1000190719" description="2-C-methyl-D-erythritol 2,4-cyclodiphosphate synthase">
    <location>
        <begin position="1"/>
        <end position="161"/>
    </location>
</feature>
<feature type="binding site" evidence="1">
    <location>
        <begin position="10"/>
        <end position="12"/>
    </location>
    <ligand>
        <name>4-CDP-2-C-methyl-D-erythritol 2-phosphate</name>
        <dbReference type="ChEBI" id="CHEBI:57919"/>
    </ligand>
</feature>
<feature type="binding site" evidence="1">
    <location>
        <position position="10"/>
    </location>
    <ligand>
        <name>a divalent metal cation</name>
        <dbReference type="ChEBI" id="CHEBI:60240"/>
    </ligand>
</feature>
<feature type="binding site" evidence="1">
    <location>
        <position position="12"/>
    </location>
    <ligand>
        <name>a divalent metal cation</name>
        <dbReference type="ChEBI" id="CHEBI:60240"/>
    </ligand>
</feature>
<feature type="binding site" evidence="1">
    <location>
        <begin position="36"/>
        <end position="37"/>
    </location>
    <ligand>
        <name>4-CDP-2-C-methyl-D-erythritol 2-phosphate</name>
        <dbReference type="ChEBI" id="CHEBI:57919"/>
    </ligand>
</feature>
<feature type="binding site" evidence="1">
    <location>
        <position position="44"/>
    </location>
    <ligand>
        <name>a divalent metal cation</name>
        <dbReference type="ChEBI" id="CHEBI:60240"/>
    </ligand>
</feature>
<feature type="binding site" evidence="1">
    <location>
        <begin position="58"/>
        <end position="60"/>
    </location>
    <ligand>
        <name>4-CDP-2-C-methyl-D-erythritol 2-phosphate</name>
        <dbReference type="ChEBI" id="CHEBI:57919"/>
    </ligand>
</feature>
<feature type="binding site" evidence="1">
    <location>
        <begin position="63"/>
        <end position="67"/>
    </location>
    <ligand>
        <name>4-CDP-2-C-methyl-D-erythritol 2-phosphate</name>
        <dbReference type="ChEBI" id="CHEBI:57919"/>
    </ligand>
</feature>
<feature type="binding site" evidence="1">
    <location>
        <begin position="102"/>
        <end position="108"/>
    </location>
    <ligand>
        <name>4-CDP-2-C-methyl-D-erythritol 2-phosphate</name>
        <dbReference type="ChEBI" id="CHEBI:57919"/>
    </ligand>
</feature>
<feature type="binding site" evidence="1">
    <location>
        <begin position="134"/>
        <end position="137"/>
    </location>
    <ligand>
        <name>4-CDP-2-C-methyl-D-erythritol 2-phosphate</name>
        <dbReference type="ChEBI" id="CHEBI:57919"/>
    </ligand>
</feature>
<feature type="binding site" evidence="1">
    <location>
        <position position="141"/>
    </location>
    <ligand>
        <name>4-CDP-2-C-methyl-D-erythritol 2-phosphate</name>
        <dbReference type="ChEBI" id="CHEBI:57919"/>
    </ligand>
</feature>
<feature type="binding site" evidence="1">
    <location>
        <position position="144"/>
    </location>
    <ligand>
        <name>4-CDP-2-C-methyl-D-erythritol 2-phosphate</name>
        <dbReference type="ChEBI" id="CHEBI:57919"/>
    </ligand>
</feature>
<feature type="site" description="Transition state stabilizer" evidence="1">
    <location>
        <position position="36"/>
    </location>
</feature>
<feature type="site" description="Transition state stabilizer" evidence="1">
    <location>
        <position position="135"/>
    </location>
</feature>
<name>ISPF_SHEB2</name>
<keyword id="KW-0414">Isoprene biosynthesis</keyword>
<keyword id="KW-0456">Lyase</keyword>
<keyword id="KW-0479">Metal-binding</keyword>
<proteinExistence type="inferred from homology"/>
<reference key="1">
    <citation type="submission" date="2008-12" db="EMBL/GenBank/DDBJ databases">
        <title>Complete sequence of chromosome of Shewanella baltica OS223.</title>
        <authorList>
            <consortium name="US DOE Joint Genome Institute"/>
            <person name="Lucas S."/>
            <person name="Copeland A."/>
            <person name="Lapidus A."/>
            <person name="Glavina del Rio T."/>
            <person name="Dalin E."/>
            <person name="Tice H."/>
            <person name="Bruce D."/>
            <person name="Goodwin L."/>
            <person name="Pitluck S."/>
            <person name="Chertkov O."/>
            <person name="Meincke L."/>
            <person name="Brettin T."/>
            <person name="Detter J.C."/>
            <person name="Han C."/>
            <person name="Kuske C.R."/>
            <person name="Larimer F."/>
            <person name="Land M."/>
            <person name="Hauser L."/>
            <person name="Kyrpides N."/>
            <person name="Ovchinnikova G."/>
            <person name="Brettar I."/>
            <person name="Rodrigues J."/>
            <person name="Konstantinidis K."/>
            <person name="Tiedje J."/>
        </authorList>
    </citation>
    <scope>NUCLEOTIDE SEQUENCE [LARGE SCALE GENOMIC DNA]</scope>
    <source>
        <strain>OS223</strain>
    </source>
</reference>
<gene>
    <name evidence="1" type="primary">ispF</name>
    <name type="ordered locus">Sbal223_1240</name>
</gene>
<dbReference type="EC" id="4.6.1.12" evidence="1"/>
<dbReference type="EMBL" id="CP001252">
    <property type="protein sequence ID" value="ACK45750.1"/>
    <property type="molecule type" value="Genomic_DNA"/>
</dbReference>
<dbReference type="RefSeq" id="WP_012587104.1">
    <property type="nucleotide sequence ID" value="NC_011663.1"/>
</dbReference>
<dbReference type="SMR" id="B8E8T4"/>
<dbReference type="KEGG" id="sbp:Sbal223_1240"/>
<dbReference type="HOGENOM" id="CLU_084630_2_0_6"/>
<dbReference type="UniPathway" id="UPA00056">
    <property type="reaction ID" value="UER00095"/>
</dbReference>
<dbReference type="Proteomes" id="UP000002507">
    <property type="component" value="Chromosome"/>
</dbReference>
<dbReference type="GO" id="GO:0008685">
    <property type="term" value="F:2-C-methyl-D-erythritol 2,4-cyclodiphosphate synthase activity"/>
    <property type="evidence" value="ECO:0007669"/>
    <property type="project" value="UniProtKB-UniRule"/>
</dbReference>
<dbReference type="GO" id="GO:0046872">
    <property type="term" value="F:metal ion binding"/>
    <property type="evidence" value="ECO:0007669"/>
    <property type="project" value="UniProtKB-KW"/>
</dbReference>
<dbReference type="GO" id="GO:0019288">
    <property type="term" value="P:isopentenyl diphosphate biosynthetic process, methylerythritol 4-phosphate pathway"/>
    <property type="evidence" value="ECO:0007669"/>
    <property type="project" value="UniProtKB-UniRule"/>
</dbReference>
<dbReference type="GO" id="GO:0016114">
    <property type="term" value="P:terpenoid biosynthetic process"/>
    <property type="evidence" value="ECO:0007669"/>
    <property type="project" value="InterPro"/>
</dbReference>
<dbReference type="CDD" id="cd00554">
    <property type="entry name" value="MECDP_synthase"/>
    <property type="match status" value="1"/>
</dbReference>
<dbReference type="FunFam" id="3.30.1330.50:FF:000001">
    <property type="entry name" value="2-C-methyl-D-erythritol 2,4-cyclodiphosphate synthase"/>
    <property type="match status" value="1"/>
</dbReference>
<dbReference type="Gene3D" id="3.30.1330.50">
    <property type="entry name" value="2-C-methyl-D-erythritol 2,4-cyclodiphosphate synthase"/>
    <property type="match status" value="1"/>
</dbReference>
<dbReference type="HAMAP" id="MF_00107">
    <property type="entry name" value="IspF"/>
    <property type="match status" value="1"/>
</dbReference>
<dbReference type="InterPro" id="IPR003526">
    <property type="entry name" value="MECDP_synthase"/>
</dbReference>
<dbReference type="InterPro" id="IPR020555">
    <property type="entry name" value="MECDP_synthase_CS"/>
</dbReference>
<dbReference type="InterPro" id="IPR036571">
    <property type="entry name" value="MECDP_synthase_sf"/>
</dbReference>
<dbReference type="NCBIfam" id="TIGR00151">
    <property type="entry name" value="ispF"/>
    <property type="match status" value="1"/>
</dbReference>
<dbReference type="PANTHER" id="PTHR43181">
    <property type="entry name" value="2-C-METHYL-D-ERYTHRITOL 2,4-CYCLODIPHOSPHATE SYNTHASE, CHLOROPLASTIC"/>
    <property type="match status" value="1"/>
</dbReference>
<dbReference type="PANTHER" id="PTHR43181:SF1">
    <property type="entry name" value="2-C-METHYL-D-ERYTHRITOL 2,4-CYCLODIPHOSPHATE SYNTHASE, CHLOROPLASTIC"/>
    <property type="match status" value="1"/>
</dbReference>
<dbReference type="Pfam" id="PF02542">
    <property type="entry name" value="YgbB"/>
    <property type="match status" value="1"/>
</dbReference>
<dbReference type="SUPFAM" id="SSF69765">
    <property type="entry name" value="IpsF-like"/>
    <property type="match status" value="1"/>
</dbReference>
<dbReference type="PROSITE" id="PS01350">
    <property type="entry name" value="ISPF"/>
    <property type="match status" value="1"/>
</dbReference>
<organism>
    <name type="scientific">Shewanella baltica (strain OS223)</name>
    <dbReference type="NCBI Taxonomy" id="407976"/>
    <lineage>
        <taxon>Bacteria</taxon>
        <taxon>Pseudomonadati</taxon>
        <taxon>Pseudomonadota</taxon>
        <taxon>Gammaproteobacteria</taxon>
        <taxon>Alteromonadales</taxon>
        <taxon>Shewanellaceae</taxon>
        <taxon>Shewanella</taxon>
    </lineage>
</organism>
<sequence>MKIRIGHGFDVHKFGAARPLILCGVEVPYETGLVAHSDGDVVLHAISDAILGALALGDIGKHFPDTDAAYKGADSRVLLRHCYALARAKGFVLGNLDVTIIAQVPKMAPHIEAMRQILAADLTSELDDINVKATTTEHLGFTGRKEGIAVEAVVLMTRKHD</sequence>
<evidence type="ECO:0000255" key="1">
    <source>
        <dbReference type="HAMAP-Rule" id="MF_00107"/>
    </source>
</evidence>
<accession>B8E8T4</accession>